<sequence length="361" mass="40250">MTEQKAIVTDAPKGGVKYTTIDMPEPEHYDAKLSPVYIGICGTDRGEVAGALSFTYNPEGENFLVLGHEALLRVDDARDNGYIKKGDLVVPLVRRPGKCINCRIGRQDNCSIGDPDKHEAGITGLHGFMRDVIYDDIEYLVKVEDPELGRIAVLTEPLKNVMKAFEVFDVVSKRSIFFGDDSTLIGKRMVIIGSGSEAFLYSFAGVDRGFDVTMVNRHDETENKLKIMDEFGVKFANYLKDMPEKIDLLVDTSGDPTTTFKFLRKVNNNGVVILFGTNGKAPGYPVDGEDIDYIVERNITIAGSVDAAKIHYVQALQSLSNWNRRHPDAMKSIITYEAKPSETNIFFQKPHGEIKTVIKWQ</sequence>
<protein>
    <recommendedName>
        <fullName evidence="1">Glucose 1-dehydrogenase</fullName>
        <shortName evidence="1">GDH</shortName>
        <shortName evidence="1">GlcDH</shortName>
        <ecNumber evidence="1 3">1.1.1.47</ecNumber>
    </recommendedName>
    <alternativeName>
        <fullName evidence="5">Galactose 1-dehydrogenase</fullName>
        <ecNumber evidence="2">1.1.1.120</ecNumber>
        <ecNumber evidence="2">1.1.1.48</ecNumber>
    </alternativeName>
</protein>
<name>GLCDH_THEAC</name>
<gene>
    <name evidence="1" type="primary">gdh</name>
    <name type="ordered locus">Ta0897</name>
</gene>
<dbReference type="EC" id="1.1.1.47" evidence="1 3"/>
<dbReference type="EC" id="1.1.1.120" evidence="2"/>
<dbReference type="EC" id="1.1.1.48" evidence="2"/>
<dbReference type="EMBL" id="X59788">
    <property type="protein sequence ID" value="CAA42450.1"/>
    <property type="molecule type" value="Genomic_DNA"/>
</dbReference>
<dbReference type="EMBL" id="AL445065">
    <property type="protein sequence ID" value="CAC12026.1"/>
    <property type="molecule type" value="Genomic_DNA"/>
</dbReference>
<dbReference type="PIR" id="S29788">
    <property type="entry name" value="S29788"/>
</dbReference>
<dbReference type="RefSeq" id="WP_010901307.1">
    <property type="nucleotide sequence ID" value="NC_002578.1"/>
</dbReference>
<dbReference type="SMR" id="P13203"/>
<dbReference type="FunCoup" id="P13203">
    <property type="interactions" value="68"/>
</dbReference>
<dbReference type="STRING" id="273075.gene:9572112"/>
<dbReference type="PaxDb" id="273075-Ta0897"/>
<dbReference type="EnsemblBacteria" id="CAC12026">
    <property type="protein sequence ID" value="CAC12026"/>
    <property type="gene ID" value="CAC12026"/>
</dbReference>
<dbReference type="KEGG" id="tac:Ta0897"/>
<dbReference type="eggNOG" id="arCOG01459">
    <property type="taxonomic scope" value="Archaea"/>
</dbReference>
<dbReference type="HOGENOM" id="CLU_026673_1_0_2"/>
<dbReference type="InParanoid" id="P13203"/>
<dbReference type="OrthoDB" id="41394at2157"/>
<dbReference type="BioCyc" id="MetaCyc:MONOMER-4889"/>
<dbReference type="BRENDA" id="1.1.1.359">
    <property type="organism ID" value="6324"/>
</dbReference>
<dbReference type="Proteomes" id="UP000001024">
    <property type="component" value="Chromosome"/>
</dbReference>
<dbReference type="GO" id="GO:0005536">
    <property type="term" value="F:D-glucose binding"/>
    <property type="evidence" value="ECO:0000314"/>
    <property type="project" value="UniProtKB"/>
</dbReference>
<dbReference type="GO" id="GO:0047910">
    <property type="term" value="F:galactose 1-dehydrogenase (NADP+) activity"/>
    <property type="evidence" value="ECO:0000314"/>
    <property type="project" value="UniProtKB"/>
</dbReference>
<dbReference type="GO" id="GO:0019151">
    <property type="term" value="F:galactose 1-dehydrogenase activity"/>
    <property type="evidence" value="ECO:0007669"/>
    <property type="project" value="UniProtKB-EC"/>
</dbReference>
<dbReference type="GO" id="GO:0005534">
    <property type="term" value="F:galactose binding"/>
    <property type="evidence" value="ECO:0000314"/>
    <property type="project" value="UniProtKB"/>
</dbReference>
<dbReference type="GO" id="GO:0047934">
    <property type="term" value="F:glucose 1-dehydrogenase (NAD+) activity"/>
    <property type="evidence" value="ECO:0007669"/>
    <property type="project" value="RHEA"/>
</dbReference>
<dbReference type="GO" id="GO:0047935">
    <property type="term" value="F:glucose 1-dehydrogenase (NADP+) activity"/>
    <property type="evidence" value="ECO:0007669"/>
    <property type="project" value="RHEA"/>
</dbReference>
<dbReference type="GO" id="GO:0047936">
    <property type="term" value="F:glucose 1-dehydrogenase [NAD(P)+] activity"/>
    <property type="evidence" value="ECO:0000314"/>
    <property type="project" value="UniProtKB"/>
</dbReference>
<dbReference type="GO" id="GO:0070403">
    <property type="term" value="F:NAD+ binding"/>
    <property type="evidence" value="ECO:0000314"/>
    <property type="project" value="UniProtKB"/>
</dbReference>
<dbReference type="GO" id="GO:0070401">
    <property type="term" value="F:NADP+ binding"/>
    <property type="evidence" value="ECO:0000314"/>
    <property type="project" value="UniProtKB"/>
</dbReference>
<dbReference type="GO" id="GO:0008270">
    <property type="term" value="F:zinc ion binding"/>
    <property type="evidence" value="ECO:0007669"/>
    <property type="project" value="UniProtKB-UniRule"/>
</dbReference>
<dbReference type="GO" id="GO:0033498">
    <property type="term" value="P:galactose catabolic process via D-galactonate"/>
    <property type="evidence" value="ECO:0000314"/>
    <property type="project" value="UniProtKB"/>
</dbReference>
<dbReference type="GO" id="GO:0019595">
    <property type="term" value="P:non-phosphorylated glucose catabolic process"/>
    <property type="evidence" value="ECO:0000314"/>
    <property type="project" value="UniProtKB"/>
</dbReference>
<dbReference type="GO" id="GO:0051262">
    <property type="term" value="P:protein tetramerization"/>
    <property type="evidence" value="ECO:0000314"/>
    <property type="project" value="UniProtKB"/>
</dbReference>
<dbReference type="CDD" id="cd08230">
    <property type="entry name" value="glucose_DH"/>
    <property type="match status" value="1"/>
</dbReference>
<dbReference type="FunFam" id="3.40.50.720:FF:000957">
    <property type="entry name" value="Glucose 1-dehydrogenase"/>
    <property type="match status" value="1"/>
</dbReference>
<dbReference type="FunFam" id="3.90.180.10:FF:000074">
    <property type="entry name" value="Glucose 1-dehydrogenase"/>
    <property type="match status" value="1"/>
</dbReference>
<dbReference type="Gene3D" id="3.90.180.10">
    <property type="entry name" value="Medium-chain alcohol dehydrogenases, catalytic domain"/>
    <property type="match status" value="1"/>
</dbReference>
<dbReference type="Gene3D" id="3.40.50.720">
    <property type="entry name" value="NAD(P)-binding Rossmann-like Domain"/>
    <property type="match status" value="1"/>
</dbReference>
<dbReference type="HAMAP" id="MF_02127">
    <property type="entry name" value="Glucose_DH"/>
    <property type="match status" value="1"/>
</dbReference>
<dbReference type="InterPro" id="IPR013154">
    <property type="entry name" value="ADH-like_N"/>
</dbReference>
<dbReference type="InterPro" id="IPR026583">
    <property type="entry name" value="Glc_1-DH_arc"/>
</dbReference>
<dbReference type="InterPro" id="IPR031640">
    <property type="entry name" value="Glu_dehyd_C"/>
</dbReference>
<dbReference type="InterPro" id="IPR011032">
    <property type="entry name" value="GroES-like_sf"/>
</dbReference>
<dbReference type="InterPro" id="IPR036291">
    <property type="entry name" value="NAD(P)-bd_dom_sf"/>
</dbReference>
<dbReference type="InterPro" id="IPR050129">
    <property type="entry name" value="Zn_alcohol_dh"/>
</dbReference>
<dbReference type="PANTHER" id="PTHR43401">
    <property type="entry name" value="L-THREONINE 3-DEHYDROGENASE"/>
    <property type="match status" value="1"/>
</dbReference>
<dbReference type="PANTHER" id="PTHR43401:SF2">
    <property type="entry name" value="L-THREONINE 3-DEHYDROGENASE"/>
    <property type="match status" value="1"/>
</dbReference>
<dbReference type="Pfam" id="PF08240">
    <property type="entry name" value="ADH_N"/>
    <property type="match status" value="1"/>
</dbReference>
<dbReference type="Pfam" id="PF16912">
    <property type="entry name" value="Glu_dehyd_C"/>
    <property type="match status" value="1"/>
</dbReference>
<dbReference type="SUPFAM" id="SSF50129">
    <property type="entry name" value="GroES-like"/>
    <property type="match status" value="1"/>
</dbReference>
<dbReference type="SUPFAM" id="SSF51735">
    <property type="entry name" value="NAD(P)-binding Rossmann-fold domains"/>
    <property type="match status" value="1"/>
</dbReference>
<keyword id="KW-0119">Carbohydrate metabolism</keyword>
<keyword id="KW-0903">Direct protein sequencing</keyword>
<keyword id="KW-0479">Metal-binding</keyword>
<keyword id="KW-0520">NAD</keyword>
<keyword id="KW-0521">NADP</keyword>
<keyword id="KW-0547">Nucleotide-binding</keyword>
<keyword id="KW-0560">Oxidoreductase</keyword>
<keyword id="KW-1185">Reference proteome</keyword>
<keyword id="KW-0862">Zinc</keyword>
<organism>
    <name type="scientific">Thermoplasma acidophilum (strain ATCC 25905 / DSM 1728 / JCM 9062 / NBRC 15155 / AMRC-C165)</name>
    <dbReference type="NCBI Taxonomy" id="273075"/>
    <lineage>
        <taxon>Archaea</taxon>
        <taxon>Methanobacteriati</taxon>
        <taxon>Thermoplasmatota</taxon>
        <taxon>Thermoplasmata</taxon>
        <taxon>Thermoplasmatales</taxon>
        <taxon>Thermoplasmataceae</taxon>
        <taxon>Thermoplasma</taxon>
    </lineage>
</organism>
<evidence type="ECO:0000255" key="1">
    <source>
        <dbReference type="HAMAP-Rule" id="MF_02127"/>
    </source>
</evidence>
<evidence type="ECO:0000269" key="2">
    <source>
    </source>
</evidence>
<evidence type="ECO:0000269" key="3">
    <source>
    </source>
</evidence>
<evidence type="ECO:0000305" key="4"/>
<evidence type="ECO:0000305" key="5">
    <source>
    </source>
</evidence>
<feature type="initiator methionine" description="Removed" evidence="2 3">
    <location>
        <position position="1"/>
    </location>
</feature>
<feature type="chain" id="PRO_0000079889" description="Glucose 1-dehydrogenase">
    <location>
        <begin position="2"/>
        <end position="361"/>
    </location>
</feature>
<feature type="binding site" evidence="1">
    <location>
        <position position="41"/>
    </location>
    <ligand>
        <name>Zn(2+)</name>
        <dbReference type="ChEBI" id="CHEBI:29105"/>
        <note>catalytic</note>
    </ligand>
</feature>
<feature type="binding site" evidence="1">
    <location>
        <position position="43"/>
    </location>
    <ligand>
        <name>substrate</name>
    </ligand>
</feature>
<feature type="binding site" evidence="1">
    <location>
        <position position="68"/>
    </location>
    <ligand>
        <name>Zn(2+)</name>
        <dbReference type="ChEBI" id="CHEBI:29105"/>
        <note>catalytic</note>
    </ligand>
</feature>
<feature type="binding site" evidence="1">
    <location>
        <position position="69"/>
    </location>
    <ligand>
        <name>Zn(2+)</name>
        <dbReference type="ChEBI" id="CHEBI:29105"/>
        <note>catalytic</note>
    </ligand>
</feature>
<feature type="binding site" evidence="1">
    <location>
        <position position="119"/>
    </location>
    <ligand>
        <name>substrate</name>
    </ligand>
</feature>
<feature type="binding site" evidence="1">
    <location>
        <position position="156"/>
    </location>
    <ligand>
        <name>substrate</name>
    </ligand>
</feature>
<feature type="binding site" evidence="1">
    <location>
        <position position="156"/>
    </location>
    <ligand>
        <name>Zn(2+)</name>
        <dbReference type="ChEBI" id="CHEBI:29105"/>
        <note>catalytic</note>
    </ligand>
</feature>
<feature type="binding site" evidence="1">
    <location>
        <position position="160"/>
    </location>
    <ligand>
        <name>substrate</name>
    </ligand>
</feature>
<feature type="binding site" evidence="1">
    <location>
        <begin position="216"/>
        <end position="218"/>
    </location>
    <ligand>
        <name>NADP(+)</name>
        <dbReference type="ChEBI" id="CHEBI:58349"/>
    </ligand>
</feature>
<feature type="binding site" evidence="1">
    <location>
        <begin position="275"/>
        <end position="277"/>
    </location>
    <ligand>
        <name>NADP(+)</name>
        <dbReference type="ChEBI" id="CHEBI:58349"/>
    </ligand>
</feature>
<feature type="binding site" evidence="1">
    <location>
        <begin position="304"/>
        <end position="306"/>
    </location>
    <ligand>
        <name>NADP(+)</name>
        <dbReference type="ChEBI" id="CHEBI:58349"/>
    </ligand>
</feature>
<feature type="binding site" evidence="1">
    <location>
        <position position="306"/>
    </location>
    <ligand>
        <name>substrate</name>
    </ligand>
</feature>
<feature type="binding site" evidence="1">
    <location>
        <position position="349"/>
    </location>
    <ligand>
        <name>NADP(+)</name>
        <dbReference type="ChEBI" id="CHEBI:58349"/>
    </ligand>
</feature>
<feature type="sequence variant">
    <original>T</original>
    <variation>S</variation>
    <location>
        <position position="2"/>
    </location>
</feature>
<feature type="sequence conflict" description="In Ref. 1; CAA42450." evidence="4" ref="1">
    <original>AKPSETNIFFQKPHGEIKTVIKWQ</original>
    <variation>RSRPKPTYSSRNHTER</variation>
    <location>
        <begin position="338"/>
        <end position="361"/>
    </location>
</feature>
<proteinExistence type="evidence at protein level"/>
<accession>P13203</accession>
<comment type="function">
    <text evidence="2 3">Catalyzes the NAD(P)(+)-dependent oxidation of D-glucose to D-gluconate via gluconolactone. Is also significantly active with galactose as substrate, but not with mannose or glucose 6-phosphate. Can utilize both NAD(+) and NADP(+) as electron acceptor, with a marked preference for NADP(+). Physiologically, may be involved in the degradation of both glucose and galactose through a non-phosphorylative variant of the Entner-Doudoroff pathway.</text>
</comment>
<comment type="catalytic activity">
    <reaction evidence="2 3">
        <text>D-glucose + NAD(+) = D-glucono-1,5-lactone + NADH + H(+)</text>
        <dbReference type="Rhea" id="RHEA:14293"/>
        <dbReference type="ChEBI" id="CHEBI:4167"/>
        <dbReference type="ChEBI" id="CHEBI:15378"/>
        <dbReference type="ChEBI" id="CHEBI:16217"/>
        <dbReference type="ChEBI" id="CHEBI:57540"/>
        <dbReference type="ChEBI" id="CHEBI:57945"/>
        <dbReference type="EC" id="1.1.1.47"/>
    </reaction>
</comment>
<comment type="catalytic activity">
    <reaction evidence="2 3">
        <text>D-glucose + NADP(+) = D-glucono-1,5-lactone + NADPH + H(+)</text>
        <dbReference type="Rhea" id="RHEA:14405"/>
        <dbReference type="ChEBI" id="CHEBI:4167"/>
        <dbReference type="ChEBI" id="CHEBI:15378"/>
        <dbReference type="ChEBI" id="CHEBI:16217"/>
        <dbReference type="ChEBI" id="CHEBI:57783"/>
        <dbReference type="ChEBI" id="CHEBI:58349"/>
        <dbReference type="EC" id="1.1.1.47"/>
    </reaction>
</comment>
<comment type="catalytic activity">
    <reaction evidence="2">
        <text>D-galactose + NAD(+) = D-galactono-1,4-lactone + NADH + H(+)</text>
        <dbReference type="Rhea" id="RHEA:21296"/>
        <dbReference type="ChEBI" id="CHEBI:4139"/>
        <dbReference type="ChEBI" id="CHEBI:15378"/>
        <dbReference type="ChEBI" id="CHEBI:15895"/>
        <dbReference type="ChEBI" id="CHEBI:57540"/>
        <dbReference type="ChEBI" id="CHEBI:57945"/>
        <dbReference type="EC" id="1.1.1.48"/>
    </reaction>
</comment>
<comment type="catalytic activity">
    <reaction evidence="2">
        <text>D-galactose + NADP(+) = D-galactono-1,5-lactone + NADPH + H(+)</text>
        <dbReference type="Rhea" id="RHEA:18625"/>
        <dbReference type="ChEBI" id="CHEBI:4139"/>
        <dbReference type="ChEBI" id="CHEBI:15378"/>
        <dbReference type="ChEBI" id="CHEBI:15945"/>
        <dbReference type="ChEBI" id="CHEBI:57783"/>
        <dbReference type="ChEBI" id="CHEBI:58349"/>
        <dbReference type="EC" id="1.1.1.120"/>
    </reaction>
</comment>
<comment type="cofactor">
    <cofactor evidence="1">
        <name>Zn(2+)</name>
        <dbReference type="ChEBI" id="CHEBI:29105"/>
    </cofactor>
</comment>
<comment type="biophysicochemical properties">
    <kinetics>
        <KM evidence="2">10 mM for glucose</KM>
        <KM evidence="2">0.113 mM for NADP(+)</KM>
        <text>The KM value for NAD(+) is superior to 30 mM, it could not be defined precisely as it was impossible to reach saturation of the enzyme.</text>
    </kinetics>
    <temperatureDependence>
        <text evidence="2">Thermostable. Retains full catalytic activity after 9 hours at 55 degrees Celsius, and at 75 degrees Celsius the half-life is approximately 3 hours.</text>
    </temperatureDependence>
</comment>
<comment type="subunit">
    <text evidence="2">Homotetramer.</text>
</comment>
<comment type="similarity">
    <text evidence="1">Belongs to the zinc-containing alcohol dehydrogenase family. Glucose 1-dehydrogenase subfamily.</text>
</comment>
<reference key="1">
    <citation type="journal article" date="1993" name="Eur. J. Biochem.">
        <title>Cloning, sequencing and expression of the gene encoding glucose dehydrogenase from the thermophilic archaeon Thermoplasma acidophilum.</title>
        <authorList>
            <person name="Bright J.R."/>
            <person name="Byrom D."/>
            <person name="Danson M.J."/>
            <person name="Hough D.W."/>
            <person name="Towner P."/>
        </authorList>
    </citation>
    <scope>NUCLEOTIDE SEQUENCE [GENOMIC DNA]</scope>
    <scope>PROTEIN SEQUENCE OF 2-18</scope>
    <scope>FUNCTION</scope>
    <scope>CATALYTIC ACTIVITY</scope>
    <source>
        <strain>ATCC 25905 / DSM 1728 / JCM 9062 / NBRC 15155 / AMRC-C165</strain>
    </source>
</reference>
<reference key="2">
    <citation type="journal article" date="2000" name="Nature">
        <title>The genome sequence of the thermoacidophilic scavenger Thermoplasma acidophilum.</title>
        <authorList>
            <person name="Ruepp A."/>
            <person name="Graml W."/>
            <person name="Santos-Martinez M.-L."/>
            <person name="Koretke K.K."/>
            <person name="Volker C."/>
            <person name="Mewes H.-W."/>
            <person name="Frishman D."/>
            <person name="Stocker S."/>
            <person name="Lupas A.N."/>
            <person name="Baumeister W."/>
        </authorList>
    </citation>
    <scope>NUCLEOTIDE SEQUENCE [LARGE SCALE GENOMIC DNA]</scope>
    <source>
        <strain>ATCC 25905 / DSM 1728 / JCM 9062 / NBRC 15155 / AMRC-C165</strain>
    </source>
</reference>
<reference key="3">
    <citation type="journal article" date="1989" name="Biochem. J.">
        <title>Purification and characterization of glucose dehydrogenase from the thermoacidophilic archaebacterium Thermoplasma acidophilum.</title>
        <authorList>
            <person name="Smith L.D."/>
            <person name="Budgen N."/>
            <person name="Bungard S.J."/>
            <person name="Danson M.J."/>
            <person name="Hough D.W."/>
        </authorList>
    </citation>
    <scope>PROTEIN SEQUENCE OF 2-25</scope>
    <scope>FUNCTION</scope>
    <scope>CATALYTIC ACTIVITY</scope>
    <scope>BIOPHYSICOCHEMICAL PROPERTIES</scope>
    <scope>SUBUNIT</scope>
    <source>
        <strain>ATCC 25905 / DSM 1728 / JCM 9062 / NBRC 15155 / AMRC-C165</strain>
    </source>
</reference>